<gene>
    <name evidence="8" type="primary">HDG7</name>
    <name evidence="7" type="synonym">HDGL2-7</name>
    <name evidence="10" type="ordered locus">At5g52170</name>
    <name evidence="11" type="ORF">F17P19.7</name>
</gene>
<keyword id="KW-0175">Coiled coil</keyword>
<keyword id="KW-0238">DNA-binding</keyword>
<keyword id="KW-0371">Homeobox</keyword>
<keyword id="KW-0539">Nucleus</keyword>
<keyword id="KW-1185">Reference proteome</keyword>
<keyword id="KW-0804">Transcription</keyword>
<keyword id="KW-0805">Transcription regulation</keyword>
<organism>
    <name type="scientific">Arabidopsis thaliana</name>
    <name type="common">Mouse-ear cress</name>
    <dbReference type="NCBI Taxonomy" id="3702"/>
    <lineage>
        <taxon>Eukaryota</taxon>
        <taxon>Viridiplantae</taxon>
        <taxon>Streptophyta</taxon>
        <taxon>Embryophyta</taxon>
        <taxon>Tracheophyta</taxon>
        <taxon>Spermatophyta</taxon>
        <taxon>Magnoliopsida</taxon>
        <taxon>eudicotyledons</taxon>
        <taxon>Gunneridae</taxon>
        <taxon>Pentapetalae</taxon>
        <taxon>rosids</taxon>
        <taxon>malvids</taxon>
        <taxon>Brassicales</taxon>
        <taxon>Brassicaceae</taxon>
        <taxon>Camelineae</taxon>
        <taxon>Arabidopsis</taxon>
    </lineage>
</organism>
<protein>
    <recommendedName>
        <fullName evidence="8">Homeobox-leucine zipper protein HDG7</fullName>
    </recommendedName>
    <alternativeName>
        <fullName evidence="8">HD-ZIP protein HDG7</fullName>
    </alternativeName>
    <alternativeName>
        <fullName evidence="7">Homeodomain GLABRA 2-like protein 7</fullName>
    </alternativeName>
    <alternativeName>
        <fullName evidence="8">Homeodomain transcription factor HDG7</fullName>
    </alternativeName>
    <alternativeName>
        <fullName evidence="8">Protein HOMEODOMAIN GLABROUS 7</fullName>
    </alternativeName>
</protein>
<accession>Q9LTK3</accession>
<proteinExistence type="evidence at protein level"/>
<sequence>MNGDLEVDMSRGDFNPSFFLGKLKDDEFESRSLSDDSFDAMSGDEDKQEQRPKKKKRKTKYHRHTSYQIQELESFFKECPHPNEKQRLELGKKLTLESKQIKFWFQNRRTQMKTQLERHENVILKQENEKLRLENSFLKESMRGSLCIDCGGAVIPGEVSFEQHQLRIENAKLKEELDRICALANRFIGGSISLEQPSNGGIGSQHLPIGHCVSGGTSLMFMDLAMEAMDELLKLAELETSLWSSKSEKGSMNHFPGSRETGLVLINSLALVETLMDTNKWAEMFECIVAVASTLEVISNGSDGSRNGSILLMQAEFQVMSPLVPIKQKKFLRYCKQHGDGLWAVVDVSYDINRGNENLKSYGGSKMFPSGCIIQDIGNGCSKVTWIEHSEYEESHTHSLYQPLLSSSVGLGATKWLATLQRQCESFTMLLSSEDHTGLSHAGTKSILKLAQRMKLNFYSGITASCIHKWEKLLAENVGQDTRILTRKSLEPSGIVLSAATSLWLPVTQQRLFEFLCDGKCRNQWDILSNGASMENTLLVPKGQQEGSCVSLLRAAGNDQNESSMLILQETWNDVSGALVVYAPVDIPSMNTVMSGGDSAYVALLPSGFSILPDGSSSSSDQFDTDGGLVNQESKGCLLTVGFQILVNSLPTAKLNVESVETVNNLIACTIHKIRAALRIPA</sequence>
<evidence type="ECO:0000255" key="1"/>
<evidence type="ECO:0000255" key="2">
    <source>
        <dbReference type="PROSITE-ProRule" id="PRU00108"/>
    </source>
</evidence>
<evidence type="ECO:0000255" key="3">
    <source>
        <dbReference type="PROSITE-ProRule" id="PRU00197"/>
    </source>
</evidence>
<evidence type="ECO:0000256" key="4">
    <source>
        <dbReference type="SAM" id="MobiDB-lite"/>
    </source>
</evidence>
<evidence type="ECO:0000269" key="5">
    <source>
    </source>
</evidence>
<evidence type="ECO:0000269" key="6">
    <source>
    </source>
</evidence>
<evidence type="ECO:0000303" key="7">
    <source>
    </source>
</evidence>
<evidence type="ECO:0000303" key="8">
    <source>
    </source>
</evidence>
<evidence type="ECO:0000305" key="9"/>
<evidence type="ECO:0000312" key="10">
    <source>
        <dbReference type="Araport" id="AT5G52170"/>
    </source>
</evidence>
<evidence type="ECO:0000312" key="11">
    <source>
        <dbReference type="EMBL" id="BAA97460.1"/>
    </source>
</evidence>
<dbReference type="EMBL" id="AB025603">
    <property type="protein sequence ID" value="BAA97460.1"/>
    <property type="molecule type" value="Genomic_DNA"/>
</dbReference>
<dbReference type="EMBL" id="CP002688">
    <property type="protein sequence ID" value="AED96179.1"/>
    <property type="molecule type" value="Genomic_DNA"/>
</dbReference>
<dbReference type="EMBL" id="CP002688">
    <property type="protein sequence ID" value="ANM70486.1"/>
    <property type="molecule type" value="Genomic_DNA"/>
</dbReference>
<dbReference type="RefSeq" id="NP_001318786.1">
    <property type="nucleotide sequence ID" value="NM_001344986.1"/>
</dbReference>
<dbReference type="RefSeq" id="NP_200030.1">
    <property type="nucleotide sequence ID" value="NM_124596.2"/>
</dbReference>
<dbReference type="SMR" id="Q9LTK3"/>
<dbReference type="FunCoup" id="Q9LTK3">
    <property type="interactions" value="11"/>
</dbReference>
<dbReference type="IntAct" id="Q9LTK3">
    <property type="interactions" value="2"/>
</dbReference>
<dbReference type="STRING" id="3702.Q9LTK3"/>
<dbReference type="PaxDb" id="3702-AT5G52170.1"/>
<dbReference type="ProteomicsDB" id="230292"/>
<dbReference type="EnsemblPlants" id="AT5G52170.1">
    <property type="protein sequence ID" value="AT5G52170.1"/>
    <property type="gene ID" value="AT5G52170"/>
</dbReference>
<dbReference type="EnsemblPlants" id="AT5G52170.3">
    <property type="protein sequence ID" value="AT5G52170.3"/>
    <property type="gene ID" value="AT5G52170"/>
</dbReference>
<dbReference type="GeneID" id="835293"/>
<dbReference type="Gramene" id="AT5G52170.1">
    <property type="protein sequence ID" value="AT5G52170.1"/>
    <property type="gene ID" value="AT5G52170"/>
</dbReference>
<dbReference type="Gramene" id="AT5G52170.3">
    <property type="protein sequence ID" value="AT5G52170.3"/>
    <property type="gene ID" value="AT5G52170"/>
</dbReference>
<dbReference type="KEGG" id="ath:AT5G52170"/>
<dbReference type="Araport" id="AT5G52170"/>
<dbReference type="TAIR" id="AT5G52170">
    <property type="gene designation" value="HDG7"/>
</dbReference>
<dbReference type="eggNOG" id="ENOG502QWUC">
    <property type="taxonomic scope" value="Eukaryota"/>
</dbReference>
<dbReference type="HOGENOM" id="CLU_015002_2_1_1"/>
<dbReference type="InParanoid" id="Q9LTK3"/>
<dbReference type="OMA" id="TWTEHSE"/>
<dbReference type="PhylomeDB" id="Q9LTK3"/>
<dbReference type="PRO" id="PR:Q9LTK3"/>
<dbReference type="Proteomes" id="UP000006548">
    <property type="component" value="Chromosome 5"/>
</dbReference>
<dbReference type="ExpressionAtlas" id="Q9LTK3">
    <property type="expression patterns" value="baseline and differential"/>
</dbReference>
<dbReference type="GO" id="GO:0005634">
    <property type="term" value="C:nucleus"/>
    <property type="evidence" value="ECO:0007669"/>
    <property type="project" value="UniProtKB-SubCell"/>
</dbReference>
<dbReference type="GO" id="GO:0003700">
    <property type="term" value="F:DNA-binding transcription factor activity"/>
    <property type="evidence" value="ECO:0000250"/>
    <property type="project" value="TAIR"/>
</dbReference>
<dbReference type="GO" id="GO:0008289">
    <property type="term" value="F:lipid binding"/>
    <property type="evidence" value="ECO:0007669"/>
    <property type="project" value="InterPro"/>
</dbReference>
<dbReference type="GO" id="GO:0043565">
    <property type="term" value="F:sequence-specific DNA binding"/>
    <property type="evidence" value="ECO:0000314"/>
    <property type="project" value="TAIR"/>
</dbReference>
<dbReference type="GO" id="GO:0030154">
    <property type="term" value="P:cell differentiation"/>
    <property type="evidence" value="ECO:0000315"/>
    <property type="project" value="UniProtKB"/>
</dbReference>
<dbReference type="CDD" id="cd00086">
    <property type="entry name" value="homeodomain"/>
    <property type="match status" value="1"/>
</dbReference>
<dbReference type="CDD" id="cd08875">
    <property type="entry name" value="START_ArGLABRA2_like"/>
    <property type="match status" value="1"/>
</dbReference>
<dbReference type="FunFam" id="1.10.10.60:FF:000229">
    <property type="entry name" value="Homeobox-leucine zipper protein HDG1"/>
    <property type="match status" value="1"/>
</dbReference>
<dbReference type="Gene3D" id="3.30.530.20">
    <property type="match status" value="1"/>
</dbReference>
<dbReference type="Gene3D" id="1.10.10.60">
    <property type="entry name" value="Homeodomain-like"/>
    <property type="match status" value="1"/>
</dbReference>
<dbReference type="InterPro" id="IPR042160">
    <property type="entry name" value="GLABRA2/ANL2/PDF2/ATML1-like"/>
</dbReference>
<dbReference type="InterPro" id="IPR001356">
    <property type="entry name" value="HD"/>
</dbReference>
<dbReference type="InterPro" id="IPR009057">
    <property type="entry name" value="Homeodomain-like_sf"/>
</dbReference>
<dbReference type="InterPro" id="IPR023393">
    <property type="entry name" value="START-like_dom_sf"/>
</dbReference>
<dbReference type="InterPro" id="IPR002913">
    <property type="entry name" value="START_lipid-bd_dom"/>
</dbReference>
<dbReference type="PANTHER" id="PTHR45654:SF75">
    <property type="entry name" value="HOMEOBOX-LEUCINE ZIPPER PROTEIN HDG7"/>
    <property type="match status" value="1"/>
</dbReference>
<dbReference type="PANTHER" id="PTHR45654">
    <property type="entry name" value="HOMEOBOX-LEUCINE ZIPPER PROTEIN MERISTEM L1"/>
    <property type="match status" value="1"/>
</dbReference>
<dbReference type="Pfam" id="PF00046">
    <property type="entry name" value="Homeodomain"/>
    <property type="match status" value="1"/>
</dbReference>
<dbReference type="Pfam" id="PF01852">
    <property type="entry name" value="START"/>
    <property type="match status" value="1"/>
</dbReference>
<dbReference type="SMART" id="SM00389">
    <property type="entry name" value="HOX"/>
    <property type="match status" value="1"/>
</dbReference>
<dbReference type="SMART" id="SM00234">
    <property type="entry name" value="START"/>
    <property type="match status" value="1"/>
</dbReference>
<dbReference type="SUPFAM" id="SSF55961">
    <property type="entry name" value="Bet v1-like"/>
    <property type="match status" value="2"/>
</dbReference>
<dbReference type="SUPFAM" id="SSF46689">
    <property type="entry name" value="Homeodomain-like"/>
    <property type="match status" value="1"/>
</dbReference>
<dbReference type="PROSITE" id="PS50071">
    <property type="entry name" value="HOMEOBOX_2"/>
    <property type="match status" value="1"/>
</dbReference>
<dbReference type="PROSITE" id="PS50848">
    <property type="entry name" value="START"/>
    <property type="match status" value="1"/>
</dbReference>
<name>HDG7_ARATH</name>
<comment type="function">
    <text evidence="5 6">Probable transcription factor that binds to the DNA sequence 5'-GCATTAAATGC-3' (PubMed:16778018). Seems to promote cell differentiation (PubMed:25564655).</text>
</comment>
<comment type="subunit">
    <text evidence="6">Interacts with AIL7/PLT7.</text>
</comment>
<comment type="subcellular location">
    <subcellularLocation>
        <location evidence="9">Nucleus</location>
    </subcellularLocation>
</comment>
<comment type="tissue specificity">
    <text evidence="5">Expressed in cells around the base of leaf primordia, in the outermost 2 to 3 cell layers along the boundary between two leaf primordia. Expressed in lateral root primordia and tips, and in the epidermal boundaries of two cotyledons at heart-stage embryo.</text>
</comment>
<comment type="disruption phenotype">
    <text evidence="6">In plants missing HDG3, HDG7, HDG11, PDF2 and ATML1, increased cell division leading to cell overproliferation.</text>
</comment>
<comment type="similarity">
    <text evidence="9">Belongs to the HD-ZIP homeobox family. Class IV subfamily.</text>
</comment>
<reference key="1">
    <citation type="submission" date="1999-04" db="EMBL/GenBank/DDBJ databases">
        <title>Structural analysis of Arabidopsis thaliana chromosome 5. XI.</title>
        <authorList>
            <person name="Kaneko T."/>
            <person name="Katoh T."/>
            <person name="Asamizu E."/>
            <person name="Sato S."/>
            <person name="Nakamura Y."/>
            <person name="Kotani H."/>
            <person name="Tabata S."/>
        </authorList>
    </citation>
    <scope>NUCLEOTIDE SEQUENCE [LARGE SCALE GENOMIC DNA]</scope>
    <source>
        <strain>cv. Columbia</strain>
    </source>
</reference>
<reference key="2">
    <citation type="journal article" date="2017" name="Plant J.">
        <title>Araport11: a complete reannotation of the Arabidopsis thaliana reference genome.</title>
        <authorList>
            <person name="Cheng C.Y."/>
            <person name="Krishnakumar V."/>
            <person name="Chan A.P."/>
            <person name="Thibaud-Nissen F."/>
            <person name="Schobel S."/>
            <person name="Town C.D."/>
        </authorList>
    </citation>
    <scope>GENOME REANNOTATION</scope>
    <source>
        <strain>cv. Columbia</strain>
    </source>
</reference>
<reference key="3">
    <citation type="journal article" date="2000" name="Plant Mol. Biol.">
        <title>Organization and structural evolution of four multigene families in Arabidopsis thaliana: AtLCAD, AtLGT, AtMYST and AtHD-GL2.</title>
        <authorList>
            <person name="Tavares R."/>
            <person name="Aubourg S."/>
            <person name="Lecharny A."/>
            <person name="Kreis M."/>
        </authorList>
    </citation>
    <scope>GENE FAMILY</scope>
</reference>
<reference key="4">
    <citation type="journal article" date="2006" name="Plant Physiol.">
        <title>Characterization of the class IV homeodomain-leucine zipper gene family in Arabidopsis.</title>
        <authorList>
            <person name="Nakamura M."/>
            <person name="Katsumata H."/>
            <person name="Abe M."/>
            <person name="Yabe N."/>
            <person name="Komeda Y."/>
            <person name="Yamamoto K.T."/>
            <person name="Takahashi T."/>
        </authorList>
    </citation>
    <scope>FUNCTION</scope>
    <scope>TISSUE SPECIFICITY</scope>
    <scope>GENE FAMILY</scope>
    <scope>NOMENCLATURE</scope>
</reference>
<reference key="5">
    <citation type="journal article" date="2015" name="Development">
        <title>AIL and HDG proteins act antagonistically to control cell proliferation.</title>
        <authorList>
            <person name="Horstman A."/>
            <person name="Fukuoka H."/>
            <person name="Muino J.M."/>
            <person name="Nitsch L."/>
            <person name="Guo C."/>
            <person name="Passarinho P."/>
            <person name="Sanchez-Perez G."/>
            <person name="Immink R."/>
            <person name="Angenent G."/>
            <person name="Boutilier K."/>
        </authorList>
    </citation>
    <scope>FUNCTION</scope>
    <scope>DISRUPTION PHENOTYPE</scope>
    <scope>INTERACTION WITH AIL7/PLT7</scope>
    <source>
        <strain>cv. Columbia</strain>
    </source>
</reference>
<feature type="chain" id="PRO_0000331668" description="Homeobox-leucine zipper protein HDG7">
    <location>
        <begin position="1"/>
        <end position="682"/>
    </location>
</feature>
<feature type="domain" description="START" evidence="3">
    <location>
        <begin position="214"/>
        <end position="429"/>
    </location>
</feature>
<feature type="DNA-binding region" description="Homeobox" evidence="2">
    <location>
        <begin position="57"/>
        <end position="116"/>
    </location>
</feature>
<feature type="region of interest" description="Disordered" evidence="4">
    <location>
        <begin position="33"/>
        <end position="65"/>
    </location>
</feature>
<feature type="coiled-coil region" evidence="1">
    <location>
        <begin position="105"/>
        <end position="186"/>
    </location>
</feature>
<feature type="compositionally biased region" description="Basic residues" evidence="4">
    <location>
        <begin position="52"/>
        <end position="65"/>
    </location>
</feature>